<keyword id="KW-0687">Ribonucleoprotein</keyword>
<keyword id="KW-0689">Ribosomal protein</keyword>
<comment type="function">
    <text evidence="1">This protein is located at the 30S-50S ribosomal subunit interface and may play a role in the structure and function of the aminoacyl-tRNA binding site.</text>
</comment>
<comment type="similarity">
    <text evidence="1">Belongs to the bacterial ribosomal protein bL19 family.</text>
</comment>
<accession>A4VZG2</accession>
<gene>
    <name evidence="1" type="primary">rplS</name>
    <name type="ordered locus">SSU98_0343</name>
</gene>
<reference key="1">
    <citation type="journal article" date="2007" name="PLoS ONE">
        <title>A glimpse of streptococcal toxic shock syndrome from comparative genomics of S. suis 2 Chinese isolates.</title>
        <authorList>
            <person name="Chen C."/>
            <person name="Tang J."/>
            <person name="Dong W."/>
            <person name="Wang C."/>
            <person name="Feng Y."/>
            <person name="Wang J."/>
            <person name="Zheng F."/>
            <person name="Pan X."/>
            <person name="Liu D."/>
            <person name="Li M."/>
            <person name="Song Y."/>
            <person name="Zhu X."/>
            <person name="Sun H."/>
            <person name="Feng T."/>
            <person name="Guo Z."/>
            <person name="Ju A."/>
            <person name="Ge J."/>
            <person name="Dong Y."/>
            <person name="Sun W."/>
            <person name="Jiang Y."/>
            <person name="Wang J."/>
            <person name="Yan J."/>
            <person name="Yang H."/>
            <person name="Wang X."/>
            <person name="Gao G.F."/>
            <person name="Yang R."/>
            <person name="Wang J."/>
            <person name="Yu J."/>
        </authorList>
    </citation>
    <scope>NUCLEOTIDE SEQUENCE [LARGE SCALE GENOMIC DNA]</scope>
    <source>
        <strain>98HAH33</strain>
    </source>
</reference>
<dbReference type="EMBL" id="CP000408">
    <property type="protein sequence ID" value="ABP91501.1"/>
    <property type="molecule type" value="Genomic_DNA"/>
</dbReference>
<dbReference type="SMR" id="A4VZG2"/>
<dbReference type="KEGG" id="ssv:SSU98_0343"/>
<dbReference type="HOGENOM" id="CLU_103507_2_1_9"/>
<dbReference type="GO" id="GO:0022625">
    <property type="term" value="C:cytosolic large ribosomal subunit"/>
    <property type="evidence" value="ECO:0007669"/>
    <property type="project" value="TreeGrafter"/>
</dbReference>
<dbReference type="GO" id="GO:0003735">
    <property type="term" value="F:structural constituent of ribosome"/>
    <property type="evidence" value="ECO:0007669"/>
    <property type="project" value="InterPro"/>
</dbReference>
<dbReference type="GO" id="GO:0006412">
    <property type="term" value="P:translation"/>
    <property type="evidence" value="ECO:0007669"/>
    <property type="project" value="UniProtKB-UniRule"/>
</dbReference>
<dbReference type="FunFam" id="2.30.30.790:FF:000001">
    <property type="entry name" value="50S ribosomal protein L19"/>
    <property type="match status" value="1"/>
</dbReference>
<dbReference type="Gene3D" id="2.30.30.790">
    <property type="match status" value="1"/>
</dbReference>
<dbReference type="HAMAP" id="MF_00402">
    <property type="entry name" value="Ribosomal_bL19"/>
    <property type="match status" value="1"/>
</dbReference>
<dbReference type="InterPro" id="IPR001857">
    <property type="entry name" value="Ribosomal_bL19"/>
</dbReference>
<dbReference type="InterPro" id="IPR018257">
    <property type="entry name" value="Ribosomal_bL19_CS"/>
</dbReference>
<dbReference type="InterPro" id="IPR038657">
    <property type="entry name" value="Ribosomal_bL19_sf"/>
</dbReference>
<dbReference type="InterPro" id="IPR008991">
    <property type="entry name" value="Translation_prot_SH3-like_sf"/>
</dbReference>
<dbReference type="NCBIfam" id="TIGR01024">
    <property type="entry name" value="rplS_bact"/>
    <property type="match status" value="1"/>
</dbReference>
<dbReference type="PANTHER" id="PTHR15680:SF9">
    <property type="entry name" value="LARGE RIBOSOMAL SUBUNIT PROTEIN BL19M"/>
    <property type="match status" value="1"/>
</dbReference>
<dbReference type="PANTHER" id="PTHR15680">
    <property type="entry name" value="RIBOSOMAL PROTEIN L19"/>
    <property type="match status" value="1"/>
</dbReference>
<dbReference type="Pfam" id="PF01245">
    <property type="entry name" value="Ribosomal_L19"/>
    <property type="match status" value="1"/>
</dbReference>
<dbReference type="PIRSF" id="PIRSF002191">
    <property type="entry name" value="Ribosomal_L19"/>
    <property type="match status" value="1"/>
</dbReference>
<dbReference type="PRINTS" id="PR00061">
    <property type="entry name" value="RIBOSOMALL19"/>
</dbReference>
<dbReference type="SUPFAM" id="SSF50104">
    <property type="entry name" value="Translation proteins SH3-like domain"/>
    <property type="match status" value="1"/>
</dbReference>
<dbReference type="PROSITE" id="PS01015">
    <property type="entry name" value="RIBOSOMAL_L19"/>
    <property type="match status" value="1"/>
</dbReference>
<proteinExistence type="inferred from homology"/>
<evidence type="ECO:0000255" key="1">
    <source>
        <dbReference type="HAMAP-Rule" id="MF_00402"/>
    </source>
</evidence>
<evidence type="ECO:0000305" key="2"/>
<feature type="chain" id="PRO_1000049754" description="Large ribosomal subunit protein bL19">
    <location>
        <begin position="1"/>
        <end position="115"/>
    </location>
</feature>
<name>RL19_STRS2</name>
<protein>
    <recommendedName>
        <fullName evidence="1">Large ribosomal subunit protein bL19</fullName>
    </recommendedName>
    <alternativeName>
        <fullName evidence="2">50S ribosomal protein L19</fullName>
    </alternativeName>
</protein>
<sequence>MNPLIQSLTEGQLRTDIPSFRPGDTVRVHAKVVEGNRERIQIFEGVVISRKGQGISEMYTVRKISGGVGVERTFPIHTPRVDKIEVVRYGKVRRAKLYYLRALQGKAARIKEIRR</sequence>
<organism>
    <name type="scientific">Streptococcus suis (strain 98HAH33)</name>
    <dbReference type="NCBI Taxonomy" id="391296"/>
    <lineage>
        <taxon>Bacteria</taxon>
        <taxon>Bacillati</taxon>
        <taxon>Bacillota</taxon>
        <taxon>Bacilli</taxon>
        <taxon>Lactobacillales</taxon>
        <taxon>Streptococcaceae</taxon>
        <taxon>Streptococcus</taxon>
    </lineage>
</organism>